<gene>
    <name evidence="1" type="primary">rpo3</name>
    <name evidence="1 3" type="synonym">rpoD</name>
    <name type="ordered locus">SSO0071</name>
    <name evidence="5" type="ORF">C04_051</name>
</gene>
<organism>
    <name type="scientific">Saccharolobus solfataricus (strain ATCC 35092 / DSM 1617 / JCM 11322 / P2)</name>
    <name type="common">Sulfolobus solfataricus</name>
    <dbReference type="NCBI Taxonomy" id="273057"/>
    <lineage>
        <taxon>Archaea</taxon>
        <taxon>Thermoproteota</taxon>
        <taxon>Thermoprotei</taxon>
        <taxon>Sulfolobales</taxon>
        <taxon>Sulfolobaceae</taxon>
        <taxon>Saccharolobus</taxon>
    </lineage>
</organism>
<dbReference type="EC" id="2.7.7.6" evidence="1"/>
<dbReference type="EMBL" id="Y08257">
    <property type="protein sequence ID" value="CAA69531.1"/>
    <property type="molecule type" value="Genomic_DNA"/>
</dbReference>
<dbReference type="EMBL" id="AE006641">
    <property type="protein sequence ID" value="AAK40433.1"/>
    <property type="molecule type" value="Genomic_DNA"/>
</dbReference>
<dbReference type="PIR" id="S75417">
    <property type="entry name" value="S75417"/>
</dbReference>
<dbReference type="RefSeq" id="WP_009988881.1">
    <property type="nucleotide sequence ID" value="NC_002754.1"/>
</dbReference>
<dbReference type="PDB" id="2PA8">
    <property type="method" value="X-ray"/>
    <property type="resolution" value="1.76 A"/>
    <property type="chains" value="D=1-265"/>
</dbReference>
<dbReference type="PDB" id="2PMZ">
    <property type="method" value="X-ray"/>
    <property type="resolution" value="3.40 A"/>
    <property type="chains" value="D/S=1-265"/>
</dbReference>
<dbReference type="PDB" id="3HKZ">
    <property type="method" value="X-ray"/>
    <property type="resolution" value="3.40 A"/>
    <property type="chains" value="D/O=1-265"/>
</dbReference>
<dbReference type="PDBsum" id="2PA8"/>
<dbReference type="PDBsum" id="2PMZ"/>
<dbReference type="PDBsum" id="3HKZ"/>
<dbReference type="SMR" id="P95989"/>
<dbReference type="DIP" id="DIP-60646N"/>
<dbReference type="FunCoup" id="P95989">
    <property type="interactions" value="194"/>
</dbReference>
<dbReference type="IntAct" id="P95989">
    <property type="interactions" value="2"/>
</dbReference>
<dbReference type="STRING" id="273057.SSO0071"/>
<dbReference type="PaxDb" id="273057-SSO0071"/>
<dbReference type="EnsemblBacteria" id="AAK40433">
    <property type="protein sequence ID" value="AAK40433"/>
    <property type="gene ID" value="SSO0071"/>
</dbReference>
<dbReference type="KEGG" id="sso:SSO0071"/>
<dbReference type="PATRIC" id="fig|273057.12.peg.72"/>
<dbReference type="eggNOG" id="arCOG04241">
    <property type="taxonomic scope" value="Archaea"/>
</dbReference>
<dbReference type="HOGENOM" id="CLU_038421_3_1_2"/>
<dbReference type="InParanoid" id="P95989"/>
<dbReference type="PhylomeDB" id="P95989"/>
<dbReference type="BRENDA" id="2.7.7.6">
    <property type="organism ID" value="6163"/>
</dbReference>
<dbReference type="EvolutionaryTrace" id="P95989"/>
<dbReference type="Proteomes" id="UP000001974">
    <property type="component" value="Chromosome"/>
</dbReference>
<dbReference type="GO" id="GO:0005737">
    <property type="term" value="C:cytoplasm"/>
    <property type="evidence" value="ECO:0007669"/>
    <property type="project" value="UniProtKB-SubCell"/>
</dbReference>
<dbReference type="GO" id="GO:0000428">
    <property type="term" value="C:DNA-directed RNA polymerase complex"/>
    <property type="evidence" value="ECO:0000314"/>
    <property type="project" value="UniProtKB"/>
</dbReference>
<dbReference type="GO" id="GO:0051538">
    <property type="term" value="F:3 iron, 4 sulfur cluster binding"/>
    <property type="evidence" value="ECO:0007669"/>
    <property type="project" value="UniProtKB-KW"/>
</dbReference>
<dbReference type="GO" id="GO:0003677">
    <property type="term" value="F:DNA binding"/>
    <property type="evidence" value="ECO:0007669"/>
    <property type="project" value="UniProtKB-UniRule"/>
</dbReference>
<dbReference type="GO" id="GO:0003899">
    <property type="term" value="F:DNA-directed RNA polymerase activity"/>
    <property type="evidence" value="ECO:0007669"/>
    <property type="project" value="UniProtKB-UniRule"/>
</dbReference>
<dbReference type="GO" id="GO:0046872">
    <property type="term" value="F:metal ion binding"/>
    <property type="evidence" value="ECO:0007669"/>
    <property type="project" value="UniProtKB-KW"/>
</dbReference>
<dbReference type="GO" id="GO:0046983">
    <property type="term" value="F:protein dimerization activity"/>
    <property type="evidence" value="ECO:0007669"/>
    <property type="project" value="InterPro"/>
</dbReference>
<dbReference type="GO" id="GO:0006351">
    <property type="term" value="P:DNA-templated transcription"/>
    <property type="evidence" value="ECO:0007669"/>
    <property type="project" value="UniProtKB-UniRule"/>
</dbReference>
<dbReference type="CDD" id="cd07030">
    <property type="entry name" value="RNAP_D"/>
    <property type="match status" value="1"/>
</dbReference>
<dbReference type="Gene3D" id="3.30.70.20">
    <property type="match status" value="1"/>
</dbReference>
<dbReference type="Gene3D" id="2.170.120.12">
    <property type="entry name" value="DNA-directed RNA polymerase, insert domain"/>
    <property type="match status" value="1"/>
</dbReference>
<dbReference type="Gene3D" id="3.30.1360.10">
    <property type="entry name" value="RNA polymerase, RBP11-like subunit"/>
    <property type="match status" value="1"/>
</dbReference>
<dbReference type="HAMAP" id="MF_00320">
    <property type="entry name" value="RNApol_arch_Rpo3"/>
    <property type="match status" value="1"/>
</dbReference>
<dbReference type="InterPro" id="IPR001514">
    <property type="entry name" value="DNA-dir_RNA_pol_30-40kDasu_CS"/>
</dbReference>
<dbReference type="InterPro" id="IPR011262">
    <property type="entry name" value="DNA-dir_RNA_pol_insert"/>
</dbReference>
<dbReference type="InterPro" id="IPR011263">
    <property type="entry name" value="DNA-dir_RNA_pol_RpoA/D/Rpb3"/>
</dbReference>
<dbReference type="InterPro" id="IPR036603">
    <property type="entry name" value="RBP11-like"/>
</dbReference>
<dbReference type="InterPro" id="IPR022842">
    <property type="entry name" value="RNAP_Rpo3/Rpb3/RPAC1"/>
</dbReference>
<dbReference type="InterPro" id="IPR036643">
    <property type="entry name" value="RNApol_insert_sf"/>
</dbReference>
<dbReference type="InterPro" id="IPR050518">
    <property type="entry name" value="Rpo3/RPB3_RNA_Pol_subunit"/>
</dbReference>
<dbReference type="NCBIfam" id="NF001988">
    <property type="entry name" value="PRK00783.1"/>
    <property type="match status" value="1"/>
</dbReference>
<dbReference type="PANTHER" id="PTHR11800">
    <property type="entry name" value="DNA-DIRECTED RNA POLYMERASE"/>
    <property type="match status" value="1"/>
</dbReference>
<dbReference type="PANTHER" id="PTHR11800:SF2">
    <property type="entry name" value="DNA-DIRECTED RNA POLYMERASE II SUBUNIT RPB3"/>
    <property type="match status" value="1"/>
</dbReference>
<dbReference type="Pfam" id="PF01000">
    <property type="entry name" value="RNA_pol_A_bac"/>
    <property type="match status" value="1"/>
</dbReference>
<dbReference type="Pfam" id="PF01193">
    <property type="entry name" value="RNA_pol_L"/>
    <property type="match status" value="1"/>
</dbReference>
<dbReference type="SMART" id="SM00662">
    <property type="entry name" value="RPOLD"/>
    <property type="match status" value="1"/>
</dbReference>
<dbReference type="SUPFAM" id="SSF56553">
    <property type="entry name" value="Insert subdomain of RNA polymerase alpha subunit"/>
    <property type="match status" value="1"/>
</dbReference>
<dbReference type="SUPFAM" id="SSF55257">
    <property type="entry name" value="RBP11-like subunits of RNA polymerase"/>
    <property type="match status" value="1"/>
</dbReference>
<dbReference type="PROSITE" id="PS00446">
    <property type="entry name" value="RNA_POL_D_30KD"/>
    <property type="match status" value="1"/>
</dbReference>
<sequence length="265" mass="30294">MSINLLHKDDTRIDLVFEGYPLEFVNAIRRASMLYVPIMAVDDVYFIENNSPLYDEILAHRLALIPFMSEEALDTYRWPEECIECTENCEKCYTKIYIEAEAPNEPRMIYSKDIKSEDPSVVPISGDIPIVLLGTNQKISLEARLRLGYGKEHAKFIPVSLSVVRYYPKVEILANCEKAVNVCPEGVFELKDGKLSVKNELSCTLCEECLRYCNGSIRISFVEDKYILEIESVGSLKPERILLEAGKSIIRKIEELEKKLVEVVK</sequence>
<proteinExistence type="evidence at protein level"/>
<name>RPO3_SACS2</name>
<keyword id="KW-0002">3D-structure</keyword>
<keyword id="KW-0003">3Fe-4S</keyword>
<keyword id="KW-0963">Cytoplasm</keyword>
<keyword id="KW-0240">DNA-directed RNA polymerase</keyword>
<keyword id="KW-0408">Iron</keyword>
<keyword id="KW-0411">Iron-sulfur</keyword>
<keyword id="KW-0479">Metal-binding</keyword>
<keyword id="KW-0548">Nucleotidyltransferase</keyword>
<keyword id="KW-1185">Reference proteome</keyword>
<keyword id="KW-0804">Transcription</keyword>
<keyword id="KW-0808">Transferase</keyword>
<accession>P95989</accession>
<feature type="chain" id="PRO_0000132765" description="DNA-directed RNA polymerase subunit Rpo3">
    <location>
        <begin position="1"/>
        <end position="265"/>
    </location>
</feature>
<feature type="binding site" evidence="7">
    <location>
        <position position="183"/>
    </location>
    <ligand>
        <name>[3Fe-4S] cluster</name>
        <dbReference type="ChEBI" id="CHEBI:21137"/>
    </ligand>
</feature>
<feature type="binding site" evidence="1 2 8 9 10">
    <location>
        <position position="203"/>
    </location>
    <ligand>
        <name>[3Fe-4S] cluster</name>
        <dbReference type="ChEBI" id="CHEBI:21137"/>
    </ligand>
</feature>
<feature type="binding site" evidence="1 2 8 10">
    <location>
        <position position="206"/>
    </location>
    <ligand>
        <name>[3Fe-4S] cluster</name>
        <dbReference type="ChEBI" id="CHEBI:21137"/>
    </ligand>
</feature>
<feature type="binding site" evidence="1 2 8 9 10">
    <location>
        <position position="209"/>
    </location>
    <ligand>
        <name>[3Fe-4S] cluster</name>
        <dbReference type="ChEBI" id="CHEBI:21137"/>
    </ligand>
</feature>
<feature type="mutagenesis site" description="Abolishes iron-sulfur-binding, causing aggregation of Rpo3 and preventing the functional Rpo3-Rpo11 subcomplex from being formed; when associated with S-203; S-206 and S-209." evidence="2">
    <original>C</original>
    <variation>S</variation>
    <location>
        <position position="183"/>
    </location>
</feature>
<feature type="mutagenesis site" description="Abolishes iron-sulfur-binding, causing aggregation of Rpo3 and preventing the functional Rpo3-Rpo11 subcomplex from being formed; when associated with S-183; S-206 and S-209." evidence="2">
    <original>C</original>
    <variation>S</variation>
    <location>
        <position position="203"/>
    </location>
</feature>
<feature type="mutagenesis site" description="Abolishes iron-sulfur-binding, causing aggregation of Rpo3 and preventing the functional Rpo3-Rpo11 subcomplex from being formed; when associated with S-183; S-203 and S-209." evidence="2">
    <original>C</original>
    <variation>S</variation>
    <location>
        <position position="206"/>
    </location>
</feature>
<feature type="mutagenesis site" description="Abolishes iron-sulfur-binding, causing aggregation of Rpo3 and preventing the functional Rpo3-Rpo11 subcomplex from being formed; when associated with S-183; S-203 and S-206." evidence="2">
    <original>C</original>
    <variation>S</variation>
    <location>
        <position position="209"/>
    </location>
</feature>
<feature type="strand" evidence="11">
    <location>
        <begin position="3"/>
        <end position="8"/>
    </location>
</feature>
<feature type="strand" evidence="11">
    <location>
        <begin position="10"/>
        <end position="20"/>
    </location>
</feature>
<feature type="helix" evidence="11">
    <location>
        <begin position="22"/>
        <end position="34"/>
    </location>
</feature>
<feature type="strand" evidence="11">
    <location>
        <begin position="38"/>
        <end position="49"/>
    </location>
</feature>
<feature type="strand" evidence="11">
    <location>
        <begin position="51"/>
        <end position="53"/>
    </location>
</feature>
<feature type="helix" evidence="11">
    <location>
        <begin position="55"/>
        <end position="62"/>
    </location>
</feature>
<feature type="helix" evidence="11">
    <location>
        <begin position="72"/>
        <end position="75"/>
    </location>
</feature>
<feature type="helix" evidence="11">
    <location>
        <begin position="79"/>
        <end position="81"/>
    </location>
</feature>
<feature type="turn" evidence="11">
    <location>
        <begin position="90"/>
        <end position="92"/>
    </location>
</feature>
<feature type="strand" evidence="11">
    <location>
        <begin position="93"/>
        <end position="101"/>
    </location>
</feature>
<feature type="strand" evidence="12">
    <location>
        <begin position="103"/>
        <end position="105"/>
    </location>
</feature>
<feature type="strand" evidence="11">
    <location>
        <begin position="107"/>
        <end position="110"/>
    </location>
</feature>
<feature type="helix" evidence="11">
    <location>
        <begin position="111"/>
        <end position="113"/>
    </location>
</feature>
<feature type="strand" evidence="11">
    <location>
        <begin position="115"/>
        <end position="118"/>
    </location>
</feature>
<feature type="strand" evidence="11">
    <location>
        <begin position="129"/>
        <end position="133"/>
    </location>
</feature>
<feature type="strand" evidence="11">
    <location>
        <begin position="138"/>
        <end position="148"/>
    </location>
</feature>
<feature type="turn" evidence="11">
    <location>
        <begin position="150"/>
        <end position="152"/>
    </location>
</feature>
<feature type="helix" evidence="11">
    <location>
        <begin position="154"/>
        <end position="156"/>
    </location>
</feature>
<feature type="strand" evidence="11">
    <location>
        <begin position="159"/>
        <end position="172"/>
    </location>
</feature>
<feature type="helix" evidence="11">
    <location>
        <begin position="179"/>
        <end position="182"/>
    </location>
</feature>
<feature type="strand" evidence="11">
    <location>
        <begin position="188"/>
        <end position="191"/>
    </location>
</feature>
<feature type="strand" evidence="11">
    <location>
        <begin position="194"/>
        <end position="198"/>
    </location>
</feature>
<feature type="helix" evidence="11">
    <location>
        <begin position="200"/>
        <end position="202"/>
    </location>
</feature>
<feature type="helix" evidence="11">
    <location>
        <begin position="208"/>
        <end position="213"/>
    </location>
</feature>
<feature type="strand" evidence="11">
    <location>
        <begin position="216"/>
        <end position="232"/>
    </location>
</feature>
<feature type="strand" evidence="11">
    <location>
        <begin position="234"/>
        <end position="236"/>
    </location>
</feature>
<feature type="helix" evidence="11">
    <location>
        <begin position="238"/>
        <end position="263"/>
    </location>
</feature>
<comment type="function">
    <text evidence="1">DNA-dependent RNA polymerase (RNAP) catalyzes the transcription of DNA into RNA using the four ribonucleoside triphosphates as substrates.</text>
</comment>
<comment type="catalytic activity">
    <reaction evidence="1">
        <text>RNA(n) + a ribonucleoside 5'-triphosphate = RNA(n+1) + diphosphate</text>
        <dbReference type="Rhea" id="RHEA:21248"/>
        <dbReference type="Rhea" id="RHEA-COMP:14527"/>
        <dbReference type="Rhea" id="RHEA-COMP:17342"/>
        <dbReference type="ChEBI" id="CHEBI:33019"/>
        <dbReference type="ChEBI" id="CHEBI:61557"/>
        <dbReference type="ChEBI" id="CHEBI:140395"/>
        <dbReference type="EC" id="2.7.7.6"/>
    </reaction>
</comment>
<comment type="cofactor">
    <cofactor evidence="1 2">
        <name>[3Fe-4S] cluster</name>
        <dbReference type="ChEBI" id="CHEBI:21137"/>
    </cofactor>
    <text evidence="1 2">Binds 1 [3Fe-4S] cluster.</text>
</comment>
<comment type="subunit">
    <text evidence="2">Part of the 13-subunit RNA polymerase complex.</text>
</comment>
<comment type="interaction">
    <interactant intactId="EBI-9022065">
        <id>P95989</id>
    </interactant>
    <interactant intactId="EBI-9022031">
        <id>Q980K0</id>
        <label>rpo11</label>
    </interactant>
    <organismsDiffer>false</organismsDiffer>
    <experiments>2</experiments>
</comment>
<comment type="subcellular location">
    <subcellularLocation>
        <location evidence="1">Cytoplasm</location>
    </subcellularLocation>
</comment>
<comment type="domain">
    <text evidence="2">The presence of the iron-sulfur cluster is required for assembly of the RNA polymerase complex.</text>
</comment>
<comment type="similarity">
    <text evidence="1">Belongs to the archaeal Rpo3/eukaryotic RPB3 RNA polymerase subunit family.</text>
</comment>
<comment type="caution">
    <text evidence="2 6">X-ray crystallography in this and other archaea shows this protein binds a 3Fe-4S cluster, although a 4Fe-4S cluster has been suggested to be present in this protein.</text>
</comment>
<reference key="1">
    <citation type="journal article" date="1996" name="Mol. Microbiol.">
        <title>Organizational characteristics and information content of an archaeal genome: 156 kb of sequence from Sulfolobus solfataricus P2.</title>
        <authorList>
            <person name="Sensen C.W."/>
            <person name="Klenk H.-P."/>
            <person name="Singh R.K."/>
            <person name="Allard G."/>
            <person name="Chan C.C.-Y."/>
            <person name="Liu Q.Y."/>
            <person name="Penny S.L."/>
            <person name="Young F."/>
            <person name="Schenk M.E."/>
            <person name="Gaasterland T."/>
            <person name="Doolittle W.F."/>
            <person name="Ragan M.A."/>
            <person name="Charlebois R.L."/>
        </authorList>
    </citation>
    <scope>NUCLEOTIDE SEQUENCE [GENOMIC DNA]</scope>
    <source>
        <strain>ATCC 35092 / DSM 1617 / JCM 11322 / P2</strain>
    </source>
</reference>
<reference key="2">
    <citation type="journal article" date="2001" name="Proc. Natl. Acad. Sci. U.S.A.">
        <title>The complete genome of the crenarchaeon Sulfolobus solfataricus P2.</title>
        <authorList>
            <person name="She Q."/>
            <person name="Singh R.K."/>
            <person name="Confalonieri F."/>
            <person name="Zivanovic Y."/>
            <person name="Allard G."/>
            <person name="Awayez M.J."/>
            <person name="Chan-Weiher C.C.-Y."/>
            <person name="Clausen I.G."/>
            <person name="Curtis B.A."/>
            <person name="De Moors A."/>
            <person name="Erauso G."/>
            <person name="Fletcher C."/>
            <person name="Gordon P.M.K."/>
            <person name="Heikamp-de Jong I."/>
            <person name="Jeffries A.C."/>
            <person name="Kozera C.J."/>
            <person name="Medina N."/>
            <person name="Peng X."/>
            <person name="Thi-Ngoc H.P."/>
            <person name="Redder P."/>
            <person name="Schenk M.E."/>
            <person name="Theriault C."/>
            <person name="Tolstrup N."/>
            <person name="Charlebois R.L."/>
            <person name="Doolittle W.F."/>
            <person name="Duguet M."/>
            <person name="Gaasterland T."/>
            <person name="Garrett R.A."/>
            <person name="Ragan M.A."/>
            <person name="Sensen C.W."/>
            <person name="Van der Oost J."/>
        </authorList>
    </citation>
    <scope>NUCLEOTIDE SEQUENCE [LARGE SCALE GENOMIC DNA]</scope>
    <source>
        <strain>ATCC 35092 / DSM 1617 / JCM 11322 / P2</strain>
    </source>
</reference>
<reference evidence="8 9 10" key="3">
    <citation type="journal article" date="2008" name="Nature">
        <title>The X-ray crystal structure of RNA polymerase from Archaea.</title>
        <authorList>
            <person name="Hirata A."/>
            <person name="Klein B.J."/>
            <person name="Murakami K.S."/>
        </authorList>
    </citation>
    <scope>X-RAY CRYSTALLOGRAPHY (3.40 ANGSTROMS) OF THE RNA POLYMERASE COMPLEX IN COMPLEX WITH IRON-SULFUR (3FE-4S)</scope>
    <scope>X-RAY CRYSTALLOGRAPHY (1.76 ANGSTROMS) IN COMPLEX WITH RPO11 AND IRON-SULFUR (3FE-4S)</scope>
    <scope>IRON-SULFUR-BINDING</scope>
    <scope>COFACTOR</scope>
    <scope>SUBUNIT</scope>
    <scope>MUTAGENESIS OF CYS-183; CYS-203; CYS-206 AND CYS-209</scope>
    <source>
        <strain>ATCC 35092 / DSM 1617 / JCM 11322 / P2</strain>
    </source>
</reference>
<protein>
    <recommendedName>
        <fullName evidence="1">DNA-directed RNA polymerase subunit Rpo3</fullName>
        <ecNumber evidence="1">2.7.7.6</ecNumber>
    </recommendedName>
    <alternativeName>
        <fullName evidence="1 4">DNA-directed RNA polymerase subunit D</fullName>
    </alternativeName>
</protein>
<evidence type="ECO:0000255" key="1">
    <source>
        <dbReference type="HAMAP-Rule" id="MF_00320"/>
    </source>
</evidence>
<evidence type="ECO:0000269" key="2">
    <source>
    </source>
</evidence>
<evidence type="ECO:0000303" key="3">
    <source>
    </source>
</evidence>
<evidence type="ECO:0000303" key="4">
    <source>
    </source>
</evidence>
<evidence type="ECO:0000303" key="5">
    <source>
    </source>
</evidence>
<evidence type="ECO:0000305" key="6"/>
<evidence type="ECO:0000305" key="7">
    <source>
    </source>
</evidence>
<evidence type="ECO:0007744" key="8">
    <source>
        <dbReference type="PDB" id="2PA8"/>
    </source>
</evidence>
<evidence type="ECO:0007744" key="9">
    <source>
        <dbReference type="PDB" id="2PMZ"/>
    </source>
</evidence>
<evidence type="ECO:0007744" key="10">
    <source>
        <dbReference type="PDB" id="3HKZ"/>
    </source>
</evidence>
<evidence type="ECO:0007829" key="11">
    <source>
        <dbReference type="PDB" id="2PA8"/>
    </source>
</evidence>
<evidence type="ECO:0007829" key="12">
    <source>
        <dbReference type="PDB" id="2PMZ"/>
    </source>
</evidence>